<sequence>QQDYTGWFDF</sequence>
<feature type="peptide" id="PRO_0000394469" description="Caerulein 1.2" evidence="2">
    <location>
        <begin position="1"/>
        <end position="10"/>
    </location>
</feature>
<feature type="modified residue" description="Pyrrolidone carboxylic acid" evidence="2">
    <location>
        <position position="1"/>
    </location>
</feature>
<feature type="modified residue" description="Sulfotyrosine" evidence="2">
    <location>
        <position position="4"/>
    </location>
</feature>
<feature type="modified residue" description="Phenylalanine amide" evidence="2">
    <location>
        <position position="10"/>
    </location>
</feature>
<comment type="function">
    <text evidence="2 3">Induces contraction of intestinal smooth muscle in isolated guinea pig ileum.</text>
</comment>
<comment type="function">
    <text evidence="2">Induces contraction of isolated smooth muscle.</text>
</comment>
<comment type="subcellular location">
    <subcellularLocation>
        <location evidence="2">Secreted</location>
    </subcellularLocation>
</comment>
<comment type="tissue specificity">
    <text evidence="2">Expressed by the skin dorsal glands.</text>
</comment>
<comment type="developmental stage">
    <text evidence="3">Expressed during summer and winter.</text>
</comment>
<comment type="similarity">
    <text evidence="1">Belongs to the gastrin/cholecystokinin family.</text>
</comment>
<organism>
    <name type="scientific">Litoria rothii</name>
    <name type="common">Roth's tree frog</name>
    <name type="synonym">Hyla rothii</name>
    <dbReference type="NCBI Taxonomy" id="336074"/>
    <lineage>
        <taxon>Eukaryota</taxon>
        <taxon>Metazoa</taxon>
        <taxon>Chordata</taxon>
        <taxon>Craniata</taxon>
        <taxon>Vertebrata</taxon>
        <taxon>Euteleostomi</taxon>
        <taxon>Amphibia</taxon>
        <taxon>Batrachia</taxon>
        <taxon>Anura</taxon>
        <taxon>Neobatrachia</taxon>
        <taxon>Hyloidea</taxon>
        <taxon>Hylidae</taxon>
        <taxon>Pelodryadinae</taxon>
        <taxon>Litoria</taxon>
    </lineage>
</organism>
<keyword id="KW-0027">Amidation</keyword>
<keyword id="KW-0878">Amphibian defense peptide</keyword>
<keyword id="KW-0903">Direct protein sequencing</keyword>
<keyword id="KW-0873">Pyrrolidone carboxylic acid</keyword>
<keyword id="KW-0964">Secreted</keyword>
<keyword id="KW-0765">Sulfation</keyword>
<reference evidence="5" key="1">
    <citation type="journal article" date="2005" name="Rapid Commun. Mass Spectrom.">
        <title>The rothein peptides from the skin secretion of Roth's tree frog Litoria rothii. Sequence determination using positive and negative ion electrospray mass spectrometry.</title>
        <authorList>
            <person name="Brinkworth C.S."/>
            <person name="Bowie J.H."/>
            <person name="Bilusich D."/>
            <person name="Tyler M.J."/>
        </authorList>
    </citation>
    <scope>PROTEIN SEQUENCE</scope>
    <scope>FUNCTION</scope>
    <scope>IDENTIFICATION BY MASS SPECTROMETRY</scope>
    <scope>SUBCELLULAR LOCATION</scope>
    <scope>TISSUE SPECIFICITY</scope>
    <scope>PYROGLUTAMATE FORMATION AT GLN-1</scope>
    <scope>SULFATION AT TYR-4</scope>
    <scope>AMIDATION AT PHE-10</scope>
    <source>
        <tissue evidence="2">Skin secretion</tissue>
    </source>
</reference>
<reference evidence="5" key="2">
    <citation type="journal article" date="2009" name="Toxicon">
        <title>Activities of seasonably variable caerulein and rothein skin peptides from the tree frogs Litoria splendida and Litoria rothii.</title>
        <authorList>
            <person name="Sherman P.J."/>
            <person name="Jackway R.J."/>
            <person name="Nicholson E."/>
            <person name="Musgrave I.F."/>
            <person name="Boontheung P."/>
            <person name="Bowie J.H."/>
        </authorList>
    </citation>
    <scope>FUNCTION</scope>
    <scope>DEVELOPMENTAL STAGE</scope>
</reference>
<proteinExistence type="evidence at protein level"/>
<protein>
    <recommendedName>
        <fullName evidence="4">Caerulein 1.2</fullName>
    </recommendedName>
</protein>
<accession>P86507</accession>
<name>CAE12_LITRO</name>
<dbReference type="GO" id="GO:0005576">
    <property type="term" value="C:extracellular region"/>
    <property type="evidence" value="ECO:0007669"/>
    <property type="project" value="UniProtKB-SubCell"/>
</dbReference>
<dbReference type="GO" id="GO:0006952">
    <property type="term" value="P:defense response"/>
    <property type="evidence" value="ECO:0007669"/>
    <property type="project" value="UniProtKB-KW"/>
</dbReference>
<evidence type="ECO:0000255" key="1"/>
<evidence type="ECO:0000269" key="2">
    <source>
    </source>
</evidence>
<evidence type="ECO:0000269" key="3">
    <source>
    </source>
</evidence>
<evidence type="ECO:0000303" key="4">
    <source>
    </source>
</evidence>
<evidence type="ECO:0000305" key="5"/>